<protein>
    <recommendedName>
        <fullName evidence="1">2-succinyl-6-hydroxy-2,4-cyclohexadiene-1-carboxylate synthase</fullName>
        <shortName evidence="1">SHCHC synthase</shortName>
        <ecNumber evidence="1">4.2.99.20</ecNumber>
    </recommendedName>
</protein>
<proteinExistence type="evidence at protein level"/>
<reference key="1">
    <citation type="submission" date="1994-07" db="EMBL/GenBank/DDBJ databases">
        <authorList>
            <person name="Sharma V."/>
            <person name="Hudspeth M.E."/>
            <person name="Meganathan R."/>
        </authorList>
    </citation>
    <scope>NUCLEOTIDE SEQUENCE [GENOMIC DNA]</scope>
    <source>
        <strain>K12</strain>
    </source>
</reference>
<reference key="2">
    <citation type="journal article" date="1997" name="DNA Res.">
        <title>Construction of a contiguous 874-kb sequence of the Escherichia coli-K12 genome corresponding to 50.0-68.8 min on the linkage map and analysis of its sequence features.</title>
        <authorList>
            <person name="Yamamoto Y."/>
            <person name="Aiba H."/>
            <person name="Baba T."/>
            <person name="Hayashi K."/>
            <person name="Inada T."/>
            <person name="Isono K."/>
            <person name="Itoh T."/>
            <person name="Kimura S."/>
            <person name="Kitagawa M."/>
            <person name="Makino K."/>
            <person name="Miki T."/>
            <person name="Mitsuhashi N."/>
            <person name="Mizobuchi K."/>
            <person name="Mori H."/>
            <person name="Nakade S."/>
            <person name="Nakamura Y."/>
            <person name="Nashimoto H."/>
            <person name="Oshima T."/>
            <person name="Oyama S."/>
            <person name="Saito N."/>
            <person name="Sampei G."/>
            <person name="Satoh Y."/>
            <person name="Sivasundaram S."/>
            <person name="Tagami H."/>
            <person name="Takahashi H."/>
            <person name="Takeda J."/>
            <person name="Takemoto K."/>
            <person name="Uehara K."/>
            <person name="Wada C."/>
            <person name="Yamagata S."/>
            <person name="Horiuchi T."/>
        </authorList>
    </citation>
    <scope>NUCLEOTIDE SEQUENCE [LARGE SCALE GENOMIC DNA]</scope>
    <source>
        <strain>K12 / W3110 / ATCC 27325 / DSM 5911</strain>
    </source>
</reference>
<reference key="3">
    <citation type="journal article" date="1997" name="Science">
        <title>The complete genome sequence of Escherichia coli K-12.</title>
        <authorList>
            <person name="Blattner F.R."/>
            <person name="Plunkett G. III"/>
            <person name="Bloch C.A."/>
            <person name="Perna N.T."/>
            <person name="Burland V."/>
            <person name="Riley M."/>
            <person name="Collado-Vides J."/>
            <person name="Glasner J.D."/>
            <person name="Rode C.K."/>
            <person name="Mayhew G.F."/>
            <person name="Gregor J."/>
            <person name="Davis N.W."/>
            <person name="Kirkpatrick H.A."/>
            <person name="Goeden M.A."/>
            <person name="Rose D.J."/>
            <person name="Mau B."/>
            <person name="Shao Y."/>
        </authorList>
    </citation>
    <scope>NUCLEOTIDE SEQUENCE [LARGE SCALE GENOMIC DNA]</scope>
    <source>
        <strain>K12 / MG1655 / ATCC 47076</strain>
    </source>
</reference>
<reference key="4">
    <citation type="journal article" date="2006" name="Mol. Syst. Biol.">
        <title>Highly accurate genome sequences of Escherichia coli K-12 strains MG1655 and W3110.</title>
        <authorList>
            <person name="Hayashi K."/>
            <person name="Morooka N."/>
            <person name="Yamamoto Y."/>
            <person name="Fujita K."/>
            <person name="Isono K."/>
            <person name="Choi S."/>
            <person name="Ohtsubo E."/>
            <person name="Baba T."/>
            <person name="Wanner B.L."/>
            <person name="Mori H."/>
            <person name="Horiuchi T."/>
        </authorList>
    </citation>
    <scope>NUCLEOTIDE SEQUENCE [LARGE SCALE GENOMIC DNA]</scope>
    <source>
        <strain>K12 / W3110 / ATCC 27325 / DSM 5911</strain>
    </source>
</reference>
<reference key="5">
    <citation type="journal article" date="1992" name="J. Bacteriol.">
        <title>Menaquinone (vitamin K2) biosynthesis: nucleotide sequence and expression of the menB gene from Escherichia coli.</title>
        <authorList>
            <person name="Sharma V."/>
            <person name="Suvarna K."/>
            <person name="Meganathan R."/>
            <person name="Hudspeth M.E."/>
        </authorList>
    </citation>
    <scope>NUCLEOTIDE SEQUENCE [GENOMIC DNA] OF 140-252</scope>
    <source>
        <strain>K12</strain>
    </source>
</reference>
<reference key="6">
    <citation type="journal article" date="2005" name="FEMS Microbiol. Rev.">
        <title>Enzyme genomics: application of general enzymatic screens to discover new enzymes.</title>
        <authorList>
            <person name="Kuznetsova E."/>
            <person name="Proudfoot M."/>
            <person name="Sanders S.A."/>
            <person name="Reinking J."/>
            <person name="Savchenko A."/>
            <person name="Arrowsmith C.H."/>
            <person name="Edwards A.M."/>
            <person name="Yakunin A.F."/>
        </authorList>
    </citation>
    <scope>FUNCTION AS AN ACYL-COA THIOESTER HYDROLASE</scope>
</reference>
<reference key="7">
    <citation type="journal article" date="2008" name="Biochemistry">
        <title>Identification and characterization of (1R,6R)-2-succinyl-6-hydroxy-2,4-cyclohexadiene-1-carboxylate synthase in the menaquinone Biosynthesis of Escherichia coli.</title>
        <authorList>
            <person name="Jiang M."/>
            <person name="Chen X."/>
            <person name="Guo Z.-F."/>
            <person name="Cao Y."/>
            <person name="Chen M."/>
            <person name="Guo Z."/>
        </authorList>
    </citation>
    <scope>FUNCTION AS A SHCHC SYNTHASE</scope>
    <scope>CATALYTIC ACTIVITY</scope>
    <scope>MUTAGENESIS OF SER-86; ASP-210 AND HIS-232</scope>
    <scope>BIOPHYSICOCHEMICAL PROPERTIES</scope>
    <scope>SUBUNIT</scope>
</reference>
<sequence length="252" mass="27682">MILHAQAKHGKPGLPWLVFLHGFSGDCHEWQEVGEAFADYSRLYVDLPGHGGSAAISVDGFDDVTDLLRKTLVSYNILDFWLVGYSLGGRVAMMAACQGLAGLCGVIVEGGHPGLQNAEQRAERQRSDRQWVQRFLTEPLTAVFADWYQQPVFASLNDDQRRELVALRSNNNGATLAAMLEATSLAVQPDLRANLSARTFAFYYLCGERDSKFRALAAELAADCHVIPRAGHNAHRENPAGVIASLAQILRF</sequence>
<keyword id="KW-0002">3D-structure</keyword>
<keyword id="KW-0456">Lyase</keyword>
<keyword id="KW-0474">Menaquinone biosynthesis</keyword>
<keyword id="KW-1185">Reference proteome</keyword>
<comment type="function">
    <text evidence="2 3">Catalyzes a proton abstraction reaction that results in 2,5-elimination of pyruvate from 2-succinyl-5-enolpyruvyl-6-hydroxy-3-cyclohexene-1-carboxylate (SEPHCHC) and the formation of 2-succinyl-6-hydroxy-2,4-cyclohexadiene-1-carboxylate (SHCHC). Is also able to catalyze the hydrolysis of the thioester bond in palmitoyl-CoA in vitro.</text>
</comment>
<comment type="catalytic activity">
    <reaction evidence="1 3">
        <text>5-enolpyruvoyl-6-hydroxy-2-succinyl-cyclohex-3-ene-1-carboxylate = (1R,6R)-6-hydroxy-2-succinyl-cyclohexa-2,4-diene-1-carboxylate + pyruvate</text>
        <dbReference type="Rhea" id="RHEA:25597"/>
        <dbReference type="ChEBI" id="CHEBI:15361"/>
        <dbReference type="ChEBI" id="CHEBI:58689"/>
        <dbReference type="ChEBI" id="CHEBI:58818"/>
        <dbReference type="EC" id="4.2.99.20"/>
    </reaction>
</comment>
<comment type="biophysicochemical properties">
    <kinetics>
        <KM evidence="3">10.1 uM for SEPHCHC (at 25 degrees Celsius and pH 7)</KM>
    </kinetics>
</comment>
<comment type="pathway">
    <text evidence="1">Quinol/quinone metabolism; 1,4-dihydroxy-2-naphthoate biosynthesis; 1,4-dihydroxy-2-naphthoate from chorismate: step 3/7.</text>
</comment>
<comment type="pathway">
    <text evidence="1">Quinol/quinone metabolism; menaquinone biosynthesis.</text>
</comment>
<comment type="subunit">
    <text evidence="1 3">Monomer.</text>
</comment>
<comment type="similarity">
    <text evidence="1 4">Belongs to the AB hydrolase superfamily. MenH family.</text>
</comment>
<comment type="sequence caution" evidence="4">
    <conflict type="frameshift">
        <sequence resource="EMBL-CDS" id="AAA24151"/>
    </conflict>
</comment>
<comment type="sequence caution" evidence="4">
    <conflict type="frameshift">
        <sequence resource="EMBL" id="M93421"/>
    </conflict>
</comment>
<name>MENH_ECOLI</name>
<gene>
    <name evidence="1" type="primary">menH</name>
    <name type="synonym">yfbB</name>
    <name type="ordered locus">b2263</name>
    <name type="ordered locus">JW2258</name>
</gene>
<dbReference type="EC" id="4.2.99.20" evidence="1"/>
<dbReference type="EMBL" id="L35030">
    <property type="protein sequence ID" value="AAA24151.1"/>
    <property type="status" value="ALT_FRAME"/>
    <property type="molecule type" value="Genomic_DNA"/>
</dbReference>
<dbReference type="EMBL" id="U00096">
    <property type="protein sequence ID" value="AAC75323.1"/>
    <property type="molecule type" value="Genomic_DNA"/>
</dbReference>
<dbReference type="EMBL" id="AP009048">
    <property type="protein sequence ID" value="BAA16087.2"/>
    <property type="molecule type" value="Genomic_DNA"/>
</dbReference>
<dbReference type="EMBL" id="M93421">
    <property type="status" value="NOT_ANNOTATED_CDS"/>
    <property type="molecule type" value="Genomic_DNA"/>
</dbReference>
<dbReference type="PIR" id="E64997">
    <property type="entry name" value="E64997"/>
</dbReference>
<dbReference type="RefSeq" id="NP_416766.1">
    <property type="nucleotide sequence ID" value="NC_000913.3"/>
</dbReference>
<dbReference type="RefSeq" id="WP_000600499.1">
    <property type="nucleotide sequence ID" value="NZ_LN832404.1"/>
</dbReference>
<dbReference type="PDB" id="4GDM">
    <property type="method" value="X-ray"/>
    <property type="resolution" value="2.75 A"/>
    <property type="chains" value="A/B/C=1-252"/>
</dbReference>
<dbReference type="PDB" id="4GEC">
    <property type="method" value="X-ray"/>
    <property type="resolution" value="2.50 A"/>
    <property type="chains" value="A/B/C=1-252"/>
</dbReference>
<dbReference type="PDB" id="4GEG">
    <property type="method" value="X-ray"/>
    <property type="resolution" value="2.49 A"/>
    <property type="chains" value="A/B/C=1-252"/>
</dbReference>
<dbReference type="PDB" id="4MXD">
    <property type="method" value="X-ray"/>
    <property type="resolution" value="1.45 A"/>
    <property type="chains" value="A=1-252"/>
</dbReference>
<dbReference type="PDB" id="4MYD">
    <property type="method" value="X-ray"/>
    <property type="resolution" value="1.37 A"/>
    <property type="chains" value="A/B/C=1-252"/>
</dbReference>
<dbReference type="PDB" id="4MYS">
    <property type="method" value="X-ray"/>
    <property type="resolution" value="1.42 A"/>
    <property type="chains" value="A/B/C=1-252"/>
</dbReference>
<dbReference type="PDBsum" id="4GDM"/>
<dbReference type="PDBsum" id="4GEC"/>
<dbReference type="PDBsum" id="4GEG"/>
<dbReference type="PDBsum" id="4MXD"/>
<dbReference type="PDBsum" id="4MYD"/>
<dbReference type="PDBsum" id="4MYS"/>
<dbReference type="SMR" id="P37355"/>
<dbReference type="BioGRID" id="4260505">
    <property type="interactions" value="18"/>
</dbReference>
<dbReference type="BioGRID" id="851077">
    <property type="interactions" value="1"/>
</dbReference>
<dbReference type="FunCoup" id="P37355">
    <property type="interactions" value="178"/>
</dbReference>
<dbReference type="IntAct" id="P37355">
    <property type="interactions" value="5"/>
</dbReference>
<dbReference type="STRING" id="511145.b2263"/>
<dbReference type="ESTHER" id="ecoli-YFBB">
    <property type="family name" value="MenH_SHCHC"/>
</dbReference>
<dbReference type="MEROPS" id="S33.996"/>
<dbReference type="PaxDb" id="511145-b2263"/>
<dbReference type="EnsemblBacteria" id="AAC75323">
    <property type="protein sequence ID" value="AAC75323"/>
    <property type="gene ID" value="b2263"/>
</dbReference>
<dbReference type="GeneID" id="946736"/>
<dbReference type="KEGG" id="ecj:JW2258"/>
<dbReference type="KEGG" id="eco:b2263"/>
<dbReference type="KEGG" id="ecoc:C3026_12640"/>
<dbReference type="PATRIC" id="fig|1411691.4.peg.4473"/>
<dbReference type="EchoBASE" id="EB2333"/>
<dbReference type="eggNOG" id="COG0596">
    <property type="taxonomic scope" value="Bacteria"/>
</dbReference>
<dbReference type="HOGENOM" id="CLU_020336_38_2_6"/>
<dbReference type="InParanoid" id="P37355"/>
<dbReference type="OMA" id="LNDWYQQ"/>
<dbReference type="OrthoDB" id="9808398at2"/>
<dbReference type="PhylomeDB" id="P37355"/>
<dbReference type="BioCyc" id="EcoCyc:EG12438-MONOMER"/>
<dbReference type="BioCyc" id="MetaCyc:EG12438-MONOMER"/>
<dbReference type="BRENDA" id="3.1.2.2">
    <property type="organism ID" value="2026"/>
</dbReference>
<dbReference type="BRENDA" id="4.2.99.20">
    <property type="organism ID" value="2026"/>
</dbReference>
<dbReference type="SABIO-RK" id="P37355"/>
<dbReference type="UniPathway" id="UPA00079"/>
<dbReference type="UniPathway" id="UPA01057">
    <property type="reaction ID" value="UER00900"/>
</dbReference>
<dbReference type="EvolutionaryTrace" id="P37355"/>
<dbReference type="PRO" id="PR:P37355"/>
<dbReference type="Proteomes" id="UP000000625">
    <property type="component" value="Chromosome"/>
</dbReference>
<dbReference type="GO" id="GO:0005829">
    <property type="term" value="C:cytosol"/>
    <property type="evidence" value="ECO:0000314"/>
    <property type="project" value="EcoCyc"/>
</dbReference>
<dbReference type="GO" id="GO:0070205">
    <property type="term" value="F:2-succinyl-6-hydroxy-2,4-cyclohexadiene-1-carboxylate synthase activity"/>
    <property type="evidence" value="ECO:0000314"/>
    <property type="project" value="EcoCyc"/>
</dbReference>
<dbReference type="GO" id="GO:0009234">
    <property type="term" value="P:menaquinone biosynthetic process"/>
    <property type="evidence" value="ECO:0000314"/>
    <property type="project" value="EcoCyc"/>
</dbReference>
<dbReference type="FunFam" id="3.40.50.1820:FF:000038">
    <property type="entry name" value="2-succinyl-6-hydroxy-2,4-cyclohexadiene-1-carboxylate synthase"/>
    <property type="match status" value="1"/>
</dbReference>
<dbReference type="Gene3D" id="3.40.50.1820">
    <property type="entry name" value="alpha/beta hydrolase"/>
    <property type="match status" value="1"/>
</dbReference>
<dbReference type="HAMAP" id="MF_01660">
    <property type="entry name" value="MenH"/>
    <property type="match status" value="1"/>
</dbReference>
<dbReference type="InterPro" id="IPR000073">
    <property type="entry name" value="AB_hydrolase_1"/>
</dbReference>
<dbReference type="InterPro" id="IPR029058">
    <property type="entry name" value="AB_hydrolase_fold"/>
</dbReference>
<dbReference type="InterPro" id="IPR022485">
    <property type="entry name" value="SHCHC_synthase_MenH"/>
</dbReference>
<dbReference type="NCBIfam" id="TIGR03695">
    <property type="entry name" value="menH_SHCHC"/>
    <property type="match status" value="1"/>
</dbReference>
<dbReference type="NCBIfam" id="NF008340">
    <property type="entry name" value="PRK11126.1"/>
    <property type="match status" value="1"/>
</dbReference>
<dbReference type="PANTHER" id="PTHR42916">
    <property type="entry name" value="2-SUCCINYL-5-ENOLPYRUVYL-6-HYDROXY-3-CYCLOHEXENE-1-CARBOXYLATE SYNTHASE"/>
    <property type="match status" value="1"/>
</dbReference>
<dbReference type="PANTHER" id="PTHR42916:SF1">
    <property type="entry name" value="PROTEIN PHYLLO, CHLOROPLASTIC"/>
    <property type="match status" value="1"/>
</dbReference>
<dbReference type="Pfam" id="PF12697">
    <property type="entry name" value="Abhydrolase_6"/>
    <property type="match status" value="1"/>
</dbReference>
<dbReference type="SUPFAM" id="SSF53474">
    <property type="entry name" value="alpha/beta-Hydrolases"/>
    <property type="match status" value="1"/>
</dbReference>
<evidence type="ECO:0000255" key="1">
    <source>
        <dbReference type="HAMAP-Rule" id="MF_01660"/>
    </source>
</evidence>
<evidence type="ECO:0000269" key="2">
    <source>
    </source>
</evidence>
<evidence type="ECO:0000269" key="3">
    <source>
    </source>
</evidence>
<evidence type="ECO:0000305" key="4"/>
<evidence type="ECO:0007829" key="5">
    <source>
        <dbReference type="PDB" id="4GEC"/>
    </source>
</evidence>
<evidence type="ECO:0007829" key="6">
    <source>
        <dbReference type="PDB" id="4MYD"/>
    </source>
</evidence>
<accession>P37355</accession>
<accession>P76477</accession>
<accession>P76932</accession>
<feature type="chain" id="PRO_0000169174" description="2-succinyl-6-hydroxy-2,4-cyclohexadiene-1-carboxylate synthase">
    <location>
        <begin position="1"/>
        <end position="252"/>
    </location>
</feature>
<feature type="mutagenesis site" description="1400-fold decrease in catalytic activity." evidence="3">
    <original>S</original>
    <variation>A</variation>
    <location>
        <position position="86"/>
    </location>
</feature>
<feature type="mutagenesis site" description="Loss of activity." evidence="3">
    <original>D</original>
    <variation>A</variation>
    <location>
        <position position="210"/>
    </location>
</feature>
<feature type="mutagenesis site" description="Loss of activity." evidence="3">
    <original>H</original>
    <variation>A</variation>
    <location>
        <position position="232"/>
    </location>
</feature>
<feature type="sequence conflict" description="In Ref. 1; AAA24151." evidence="4" ref="1">
    <original>L</original>
    <variation>V</variation>
    <location>
        <position position="176"/>
    </location>
</feature>
<feature type="strand" evidence="6">
    <location>
        <begin position="5"/>
        <end position="8"/>
    </location>
</feature>
<feature type="strand" evidence="6">
    <location>
        <begin position="16"/>
        <end position="20"/>
    </location>
</feature>
<feature type="turn" evidence="6">
    <location>
        <begin position="27"/>
        <end position="30"/>
    </location>
</feature>
<feature type="helix" evidence="6">
    <location>
        <begin position="31"/>
        <end position="34"/>
    </location>
</feature>
<feature type="helix" evidence="5">
    <location>
        <begin position="35"/>
        <end position="37"/>
    </location>
</feature>
<feature type="strand" evidence="6">
    <location>
        <begin position="40"/>
        <end position="45"/>
    </location>
</feature>
<feature type="helix" evidence="6">
    <location>
        <begin position="51"/>
        <end position="53"/>
    </location>
</feature>
<feature type="helix" evidence="6">
    <location>
        <begin position="61"/>
        <end position="74"/>
    </location>
</feature>
<feature type="strand" evidence="6">
    <location>
        <begin position="79"/>
        <end position="85"/>
    </location>
</feature>
<feature type="helix" evidence="6">
    <location>
        <begin position="87"/>
        <end position="98"/>
    </location>
</feature>
<feature type="strand" evidence="6">
    <location>
        <begin position="103"/>
        <end position="110"/>
    </location>
</feature>
<feature type="helix" evidence="6">
    <location>
        <begin position="118"/>
        <end position="137"/>
    </location>
</feature>
<feature type="helix" evidence="6">
    <location>
        <begin position="140"/>
        <end position="147"/>
    </location>
</feature>
<feature type="helix" evidence="6">
    <location>
        <begin position="151"/>
        <end position="153"/>
    </location>
</feature>
<feature type="helix" evidence="6">
    <location>
        <begin position="158"/>
        <end position="168"/>
    </location>
</feature>
<feature type="helix" evidence="6">
    <location>
        <begin position="173"/>
        <end position="182"/>
    </location>
</feature>
<feature type="helix" evidence="6">
    <location>
        <begin position="185"/>
        <end position="187"/>
    </location>
</feature>
<feature type="helix" evidence="6">
    <location>
        <begin position="192"/>
        <end position="196"/>
    </location>
</feature>
<feature type="strand" evidence="6">
    <location>
        <begin position="199"/>
        <end position="207"/>
    </location>
</feature>
<feature type="helix" evidence="6">
    <location>
        <begin position="211"/>
        <end position="218"/>
    </location>
</feature>
<feature type="strand" evidence="6">
    <location>
        <begin position="220"/>
        <end position="227"/>
    </location>
</feature>
<feature type="helix" evidence="6">
    <location>
        <begin position="234"/>
        <end position="237"/>
    </location>
</feature>
<feature type="helix" evidence="6">
    <location>
        <begin position="239"/>
        <end position="250"/>
    </location>
</feature>
<organism>
    <name type="scientific">Escherichia coli (strain K12)</name>
    <dbReference type="NCBI Taxonomy" id="83333"/>
    <lineage>
        <taxon>Bacteria</taxon>
        <taxon>Pseudomonadati</taxon>
        <taxon>Pseudomonadota</taxon>
        <taxon>Gammaproteobacteria</taxon>
        <taxon>Enterobacterales</taxon>
        <taxon>Enterobacteriaceae</taxon>
        <taxon>Escherichia</taxon>
    </lineage>
</organism>